<reference key="1">
    <citation type="journal article" date="2008" name="Biol. Direct">
        <title>Complete genome sequence of the extremely acidophilic methanotroph isolate V4, Methylacidiphilum infernorum, a representative of the bacterial phylum Verrucomicrobia.</title>
        <authorList>
            <person name="Hou S."/>
            <person name="Makarova K.S."/>
            <person name="Saw J.H."/>
            <person name="Senin P."/>
            <person name="Ly B.V."/>
            <person name="Zhou Z."/>
            <person name="Ren Y."/>
            <person name="Wang J."/>
            <person name="Galperin M.Y."/>
            <person name="Omelchenko M.V."/>
            <person name="Wolf Y.I."/>
            <person name="Yutin N."/>
            <person name="Koonin E.V."/>
            <person name="Stott M.B."/>
            <person name="Mountain B.W."/>
            <person name="Crowe M.A."/>
            <person name="Smirnova A.V."/>
            <person name="Dunfield P.F."/>
            <person name="Feng L."/>
            <person name="Wang L."/>
            <person name="Alam M."/>
        </authorList>
    </citation>
    <scope>NUCLEOTIDE SEQUENCE [LARGE SCALE GENOMIC DNA]</scope>
    <source>
        <strain>Isolate V4</strain>
    </source>
</reference>
<accession>B3DWU5</accession>
<protein>
    <recommendedName>
        <fullName evidence="1">Type III pantothenate kinase</fullName>
        <ecNumber evidence="1">2.7.1.33</ecNumber>
    </recommendedName>
    <alternativeName>
        <fullName evidence="1">PanK-III</fullName>
    </alternativeName>
    <alternativeName>
        <fullName evidence="1">Pantothenic acid kinase</fullName>
    </alternativeName>
</protein>
<name>COAX_METI4</name>
<proteinExistence type="inferred from homology"/>
<dbReference type="EC" id="2.7.1.33" evidence="1"/>
<dbReference type="EMBL" id="CP000975">
    <property type="protein sequence ID" value="ACD83758.1"/>
    <property type="molecule type" value="Genomic_DNA"/>
</dbReference>
<dbReference type="RefSeq" id="WP_012464040.1">
    <property type="nucleotide sequence ID" value="NC_010794.1"/>
</dbReference>
<dbReference type="SMR" id="B3DWU5"/>
<dbReference type="STRING" id="481448.Minf_1704"/>
<dbReference type="KEGG" id="min:Minf_1704"/>
<dbReference type="eggNOG" id="COG1521">
    <property type="taxonomic scope" value="Bacteria"/>
</dbReference>
<dbReference type="HOGENOM" id="CLU_066627_1_0_0"/>
<dbReference type="OrthoDB" id="9804707at2"/>
<dbReference type="UniPathway" id="UPA00241">
    <property type="reaction ID" value="UER00352"/>
</dbReference>
<dbReference type="Proteomes" id="UP000009149">
    <property type="component" value="Chromosome"/>
</dbReference>
<dbReference type="GO" id="GO:0005737">
    <property type="term" value="C:cytoplasm"/>
    <property type="evidence" value="ECO:0007669"/>
    <property type="project" value="UniProtKB-SubCell"/>
</dbReference>
<dbReference type="GO" id="GO:0005524">
    <property type="term" value="F:ATP binding"/>
    <property type="evidence" value="ECO:0007669"/>
    <property type="project" value="UniProtKB-UniRule"/>
</dbReference>
<dbReference type="GO" id="GO:0046872">
    <property type="term" value="F:metal ion binding"/>
    <property type="evidence" value="ECO:0007669"/>
    <property type="project" value="UniProtKB-KW"/>
</dbReference>
<dbReference type="GO" id="GO:0004594">
    <property type="term" value="F:pantothenate kinase activity"/>
    <property type="evidence" value="ECO:0007669"/>
    <property type="project" value="UniProtKB-UniRule"/>
</dbReference>
<dbReference type="GO" id="GO:0015937">
    <property type="term" value="P:coenzyme A biosynthetic process"/>
    <property type="evidence" value="ECO:0007669"/>
    <property type="project" value="UniProtKB-UniRule"/>
</dbReference>
<dbReference type="CDD" id="cd24015">
    <property type="entry name" value="ASKHA_NBD_PanK-III"/>
    <property type="match status" value="1"/>
</dbReference>
<dbReference type="Gene3D" id="3.30.420.40">
    <property type="match status" value="2"/>
</dbReference>
<dbReference type="HAMAP" id="MF_01274">
    <property type="entry name" value="Pantothen_kinase_3"/>
    <property type="match status" value="1"/>
</dbReference>
<dbReference type="InterPro" id="IPR043129">
    <property type="entry name" value="ATPase_NBD"/>
</dbReference>
<dbReference type="InterPro" id="IPR004619">
    <property type="entry name" value="Type_III_PanK"/>
</dbReference>
<dbReference type="NCBIfam" id="TIGR00671">
    <property type="entry name" value="baf"/>
    <property type="match status" value="1"/>
</dbReference>
<dbReference type="PANTHER" id="PTHR34265">
    <property type="entry name" value="TYPE III PANTOTHENATE KINASE"/>
    <property type="match status" value="1"/>
</dbReference>
<dbReference type="PANTHER" id="PTHR34265:SF1">
    <property type="entry name" value="TYPE III PANTOTHENATE KINASE"/>
    <property type="match status" value="1"/>
</dbReference>
<dbReference type="Pfam" id="PF03309">
    <property type="entry name" value="Pan_kinase"/>
    <property type="match status" value="1"/>
</dbReference>
<dbReference type="SUPFAM" id="SSF53067">
    <property type="entry name" value="Actin-like ATPase domain"/>
    <property type="match status" value="2"/>
</dbReference>
<keyword id="KW-0067">ATP-binding</keyword>
<keyword id="KW-0173">Coenzyme A biosynthesis</keyword>
<keyword id="KW-0963">Cytoplasm</keyword>
<keyword id="KW-0418">Kinase</keyword>
<keyword id="KW-0479">Metal-binding</keyword>
<keyword id="KW-0547">Nucleotide-binding</keyword>
<keyword id="KW-0630">Potassium</keyword>
<keyword id="KW-0808">Transferase</keyword>
<evidence type="ECO:0000255" key="1">
    <source>
        <dbReference type="HAMAP-Rule" id="MF_01274"/>
    </source>
</evidence>
<gene>
    <name evidence="1" type="primary">coaX</name>
    <name type="ordered locus">Minf_1704</name>
</gene>
<comment type="function">
    <text evidence="1">Catalyzes the phosphorylation of pantothenate (Pan), the first step in CoA biosynthesis.</text>
</comment>
<comment type="catalytic activity">
    <reaction evidence="1">
        <text>(R)-pantothenate + ATP = (R)-4'-phosphopantothenate + ADP + H(+)</text>
        <dbReference type="Rhea" id="RHEA:16373"/>
        <dbReference type="ChEBI" id="CHEBI:10986"/>
        <dbReference type="ChEBI" id="CHEBI:15378"/>
        <dbReference type="ChEBI" id="CHEBI:29032"/>
        <dbReference type="ChEBI" id="CHEBI:30616"/>
        <dbReference type="ChEBI" id="CHEBI:456216"/>
        <dbReference type="EC" id="2.7.1.33"/>
    </reaction>
</comment>
<comment type="cofactor">
    <cofactor evidence="1">
        <name>NH4(+)</name>
        <dbReference type="ChEBI" id="CHEBI:28938"/>
    </cofactor>
    <cofactor evidence="1">
        <name>K(+)</name>
        <dbReference type="ChEBI" id="CHEBI:29103"/>
    </cofactor>
    <text evidence="1">A monovalent cation. Ammonium or potassium.</text>
</comment>
<comment type="pathway">
    <text evidence="1">Cofactor biosynthesis; coenzyme A biosynthesis; CoA from (R)-pantothenate: step 1/5.</text>
</comment>
<comment type="subunit">
    <text evidence="1">Homodimer.</text>
</comment>
<comment type="subcellular location">
    <subcellularLocation>
        <location evidence="1">Cytoplasm</location>
    </subcellularLocation>
</comment>
<comment type="similarity">
    <text evidence="1">Belongs to the type III pantothenate kinase family.</text>
</comment>
<organism>
    <name type="scientific">Methylacidiphilum infernorum (isolate V4)</name>
    <name type="common">Methylokorus infernorum (strain V4)</name>
    <dbReference type="NCBI Taxonomy" id="481448"/>
    <lineage>
        <taxon>Bacteria</taxon>
        <taxon>Pseudomonadati</taxon>
        <taxon>Verrucomicrobiota</taxon>
        <taxon>Methylacidiphilae</taxon>
        <taxon>Methylacidiphilales</taxon>
        <taxon>Methylacidiphilaceae</taxon>
        <taxon>Methylacidiphilum (ex Ratnadevi et al. 2023)</taxon>
    </lineage>
</organism>
<feature type="chain" id="PRO_1000165201" description="Type III pantothenate kinase">
    <location>
        <begin position="1"/>
        <end position="271"/>
    </location>
</feature>
<feature type="active site" description="Proton acceptor" evidence="1">
    <location>
        <position position="94"/>
    </location>
</feature>
<feature type="binding site" evidence="1">
    <location>
        <begin position="5"/>
        <end position="12"/>
    </location>
    <ligand>
        <name>ATP</name>
        <dbReference type="ChEBI" id="CHEBI:30616"/>
    </ligand>
</feature>
<feature type="binding site" evidence="1">
    <location>
        <position position="85"/>
    </location>
    <ligand>
        <name>substrate</name>
    </ligand>
</feature>
<feature type="binding site" evidence="1">
    <location>
        <begin position="92"/>
        <end position="95"/>
    </location>
    <ligand>
        <name>substrate</name>
    </ligand>
</feature>
<feature type="binding site" evidence="1">
    <location>
        <position position="114"/>
    </location>
    <ligand>
        <name>K(+)</name>
        <dbReference type="ChEBI" id="CHEBI:29103"/>
    </ligand>
</feature>
<feature type="binding site" evidence="1">
    <location>
        <position position="117"/>
    </location>
    <ligand>
        <name>ATP</name>
        <dbReference type="ChEBI" id="CHEBI:30616"/>
    </ligand>
</feature>
<feature type="binding site" evidence="1">
    <location>
        <position position="169"/>
    </location>
    <ligand>
        <name>substrate</name>
    </ligand>
</feature>
<sequence length="271" mass="30049">MILVDISNSVTKIGLFKEGELRLLEKIPTAQISFEQTERIAQMYPLEDLILCSVVPQKNLFFEKPFLGRLYQIDPTVPLGIPIHYPNPREIGADRLANAVALSLLYGYPAVAIDFGTATTFDIVDQKGAFCGGIIAPGLSMMTSYLHEKTALLPLVEIKEPSKVIAQSTEEALRVGAVHGYRGMVQYLIEKIKEELGLLQKFIVVATGGGSRLVCSQLKSVDVIDEMLTLKGIRLIGEILIKRKRKDLPFPEGYPPMKGESFPFSLFTHNQ</sequence>